<geneLocation type="plasmid">
    <name>F</name>
</geneLocation>
<organism>
    <name type="scientific">Escherichia coli (strain K12)</name>
    <dbReference type="NCBI Taxonomy" id="83333"/>
    <lineage>
        <taxon>Bacteria</taxon>
        <taxon>Pseudomonadati</taxon>
        <taxon>Pseudomonadota</taxon>
        <taxon>Gammaproteobacteria</taxon>
        <taxon>Enterobacterales</taxon>
        <taxon>Enterobacteriaceae</taxon>
        <taxon>Escherichia</taxon>
    </lineage>
</organism>
<reference key="1">
    <citation type="journal article" date="1986" name="Nucleic Acids Res.">
        <title>The miniF plasmid C protein: sequence, purification and DNA binding.</title>
        <authorList>
            <person name="Caughey P.A."/>
            <person name="de Feyter R."/>
            <person name="Lane H.E.D."/>
        </authorList>
    </citation>
    <scope>NUCLEOTIDE SEQUENCE [GENOMIC DNA]</scope>
</reference>
<reference key="2">
    <citation type="submission" date="1986-08" db="EMBL/GenBank/DDBJ databases">
        <title>F plasmid DNA complete mini-F region (F coordinates 40.301F to 49.869F).</title>
        <authorList>
            <person name="Eichenlaub R."/>
        </authorList>
    </citation>
    <scope>NUCLEOTIDE SEQUENCE [GENOMIC DNA]</scope>
</reference>
<reference key="3">
    <citation type="submission" date="2000-04" db="EMBL/GenBank/DDBJ databases">
        <title>Complete nucleotide sequence of the F plasmid: its implications for organization and diversification of plasmid genomes.</title>
        <authorList>
            <person name="Shimizu H."/>
            <person name="Saitoh Y."/>
            <person name="Suda Y."/>
            <person name="Uehara K."/>
            <person name="Sampei G."/>
            <person name="Mizobuchi K."/>
        </authorList>
    </citation>
    <scope>NUCLEOTIDE SEQUENCE [LARGE SCALE GENOMIC DNA]</scope>
    <source>
        <strain>K12 / CR63</strain>
    </source>
</reference>
<reference key="4">
    <citation type="journal article" date="1984" name="J. Mol. Biol.">
        <title>The mini-F primary origin. Sequence analysis and multiple activities.</title>
        <authorList>
            <person name="Lane D."/>
            <person name="Hill D."/>
            <person name="Caughey P."/>
            <person name="Gunn P."/>
        </authorList>
    </citation>
    <scope>NUCLEOTIDE SEQUENCE [GENOMIC DNA] OF 1-172</scope>
</reference>
<reference key="5">
    <citation type="journal article" date="1983" name="J. Bacteriol.">
        <title>Identification of the pifC gene and its role in negative control of F factor pif gene expression.</title>
        <authorList>
            <person name="Miller J.F."/>
            <person name="Malamy M.H."/>
        </authorList>
    </citation>
    <scope>CHARACTERIZATION</scope>
</reference>
<sequence length="362" mass="40653">MLSQLNLRFHKKLIEALKTRAGRENTSVNALAERFLDDGLKTVAPGDGYFQLIADPEATVRQLYRHIILGQTFGTSALSRDELRFVLVHVREAFLRGHNRLATLPALDTLLDITGNLLAWQVEHDRPVDGHYLKGIFRLAGKNWTEEFEAFRAALRPVVDQMYAEHLLRPLESDCFGLAEVPDAVLAEIFTLPRLKAVFPLMLRGLDWNTEQARTLAQELRPVISAVTETIEAGTLRLEIRVDGQHPGERPGAWYTTPRLHLLITGQDFVVPYGWEALSELLGLFTLYARHPEALTHGHQGERVMFSPPGNVTPEGFFGIDGLRIFMPAEAFETLVRELATRCQEGPLAEALTGLRCLYGDL</sequence>
<proteinExistence type="evidence at protein level"/>
<dbReference type="EMBL" id="M12987">
    <property type="protein sequence ID" value="AAA24897.1"/>
    <property type="status" value="ALT_INIT"/>
    <property type="molecule type" value="Genomic_DNA"/>
</dbReference>
<dbReference type="EMBL" id="X04968">
    <property type="protein sequence ID" value="CAA28641.1"/>
    <property type="molecule type" value="Genomic_DNA"/>
</dbReference>
<dbReference type="EMBL" id="AP001918">
    <property type="protein sequence ID" value="BAA97911.1"/>
    <property type="status" value="ALT_INIT"/>
    <property type="molecule type" value="Genomic_DNA"/>
</dbReference>
<dbReference type="EMBL" id="X01740">
    <property type="protein sequence ID" value="CAA25877.1"/>
    <property type="status" value="ALT_INIT"/>
    <property type="molecule type" value="Genomic_DNA"/>
</dbReference>
<dbReference type="PIR" id="A24710">
    <property type="entry name" value="A24710"/>
</dbReference>
<dbReference type="RefSeq" id="NP_061420.1">
    <property type="nucleotide sequence ID" value="NC_002483.1"/>
</dbReference>
<dbReference type="RefSeq" id="WP_000952217.1">
    <property type="nucleotide sequence ID" value="NZ_JACEFS010000051.1"/>
</dbReference>
<dbReference type="SMR" id="P10030"/>
<dbReference type="KEGG" id="ecoc:C3026_24315"/>
<dbReference type="PRO" id="PR:P10030"/>
<dbReference type="GO" id="GO:0003677">
    <property type="term" value="F:DNA binding"/>
    <property type="evidence" value="ECO:0007669"/>
    <property type="project" value="UniProtKB-KW"/>
</dbReference>
<evidence type="ECO:0000305" key="1"/>
<name>PIFC_ECOLI</name>
<comment type="function">
    <text>Transcription repression of its own gene by binding to the PIF operator (pifO) and replication initiation from the primary origin (ori-1). Transcriptional repressor of the pifA and pifB.</text>
</comment>
<comment type="miscellaneous">
    <text>C protein has a much higher affinity for pifO than for ori-1.</text>
</comment>
<comment type="miscellaneous">
    <text>C protein, like p22 proteins, contains a number of alpha-helical regions and these may be involved in forming a pattern of non-covalent contacts with DNA which is different from that formed by most DNA-binding proteins.</text>
</comment>
<comment type="sequence caution" evidence="1">
    <conflict type="erroneous initiation">
        <sequence resource="EMBL-CDS" id="AAA24897"/>
    </conflict>
</comment>
<comment type="sequence caution" evidence="1">
    <conflict type="erroneous initiation">
        <sequence resource="EMBL-CDS" id="BAA97911"/>
    </conflict>
</comment>
<comment type="sequence caution" evidence="1">
    <conflict type="erroneous initiation">
        <sequence resource="EMBL-CDS" id="CAA25877"/>
    </conflict>
</comment>
<feature type="chain" id="PRO_0000068414" description="Transcriptional repressor PifC">
    <location>
        <begin position="1"/>
        <end position="362"/>
    </location>
</feature>
<feature type="sequence conflict" description="In Ref. 2; AAA24897." evidence="1" ref="2">
    <original>GFFGIDGLRIFMPAEAFETLVRELATRCQEGPLAEALTGLRCLYGDL</original>
    <variation>ASSG</variation>
    <location>
        <begin position="316"/>
        <end position="362"/>
    </location>
</feature>
<protein>
    <recommendedName>
        <fullName>Transcriptional repressor PifC</fullName>
        <shortName>Protein C</shortName>
    </recommendedName>
</protein>
<accession>P10030</accession>
<accession>P13950</accession>
<keyword id="KW-0238">DNA-binding</keyword>
<keyword id="KW-0614">Plasmid</keyword>
<keyword id="KW-0678">Repressor</keyword>
<keyword id="KW-0804">Transcription</keyword>
<keyword id="KW-0805">Transcription regulation</keyword>
<gene>
    <name type="primary">pifC</name>
    <name type="synonym">C</name>
    <name type="synonym">repC</name>
    <name type="ordered locus">ECOK12F041</name>
</gene>